<keyword id="KW-0143">Chaperone</keyword>
<keyword id="KW-0963">Cytoplasm</keyword>
<keyword id="KW-0533">Nickel</keyword>
<keyword id="KW-0996">Nickel insertion</keyword>
<protein>
    <recommendedName>
        <fullName evidence="1">Urease accessory protein UreE</fullName>
    </recommendedName>
</protein>
<sequence>MLYLTQRLEIPSAATASVTLPIDVRVKSRVKVTLNDGREAGLLLPRGLLLRGGDVLSNEEGTEFVQVIAADEGVSVVRCDDPFMLAKACYHLGNRHVPLQIMPGELRYHHDHVLDDMLRQFGLTVTFGQLPFEPEAGAYASESHGHHHAHHDHHAHSH</sequence>
<evidence type="ECO:0000255" key="1">
    <source>
        <dbReference type="HAMAP-Rule" id="MF_00822"/>
    </source>
</evidence>
<comment type="function">
    <text evidence="1">Involved in urease metallocenter assembly. Binds nickel. Probably functions as a nickel donor during metallocenter assembly.</text>
</comment>
<comment type="subcellular location">
    <subcellularLocation>
        <location evidence="1">Cytoplasm</location>
    </subcellularLocation>
</comment>
<comment type="similarity">
    <text evidence="1">Belongs to the UreE family.</text>
</comment>
<gene>
    <name evidence="1" type="primary">ureE</name>
    <name type="ordered locus">KPN78578_34030</name>
    <name type="ORF">KPN_03468</name>
</gene>
<accession>A6TE43</accession>
<organism>
    <name type="scientific">Klebsiella pneumoniae subsp. pneumoniae (strain ATCC 700721 / MGH 78578)</name>
    <dbReference type="NCBI Taxonomy" id="272620"/>
    <lineage>
        <taxon>Bacteria</taxon>
        <taxon>Pseudomonadati</taxon>
        <taxon>Pseudomonadota</taxon>
        <taxon>Gammaproteobacteria</taxon>
        <taxon>Enterobacterales</taxon>
        <taxon>Enterobacteriaceae</taxon>
        <taxon>Klebsiella/Raoultella group</taxon>
        <taxon>Klebsiella</taxon>
        <taxon>Klebsiella pneumoniae complex</taxon>
    </lineage>
</organism>
<proteinExistence type="inferred from homology"/>
<feature type="chain" id="PRO_1000083894" description="Urease accessory protein UreE">
    <location>
        <begin position="1"/>
        <end position="158"/>
    </location>
</feature>
<reference key="1">
    <citation type="submission" date="2006-09" db="EMBL/GenBank/DDBJ databases">
        <authorList>
            <consortium name="The Klebsiella pneumonia Genome Sequencing Project"/>
            <person name="McClelland M."/>
            <person name="Sanderson E.K."/>
            <person name="Spieth J."/>
            <person name="Clifton W.S."/>
            <person name="Latreille P."/>
            <person name="Sabo A."/>
            <person name="Pepin K."/>
            <person name="Bhonagiri V."/>
            <person name="Porwollik S."/>
            <person name="Ali J."/>
            <person name="Wilson R.K."/>
        </authorList>
    </citation>
    <scope>NUCLEOTIDE SEQUENCE [LARGE SCALE GENOMIC DNA]</scope>
    <source>
        <strain>ATCC 700721 / MGH 78578</strain>
    </source>
</reference>
<dbReference type="EMBL" id="CP000647">
    <property type="protein sequence ID" value="ABR78864.1"/>
    <property type="molecule type" value="Genomic_DNA"/>
</dbReference>
<dbReference type="RefSeq" id="WP_004215466.1">
    <property type="nucleotide sequence ID" value="NC_009648.1"/>
</dbReference>
<dbReference type="SMR" id="A6TE43"/>
<dbReference type="STRING" id="272620.KPN_03468"/>
<dbReference type="jPOST" id="A6TE43"/>
<dbReference type="PaxDb" id="272620-KPN_03468"/>
<dbReference type="EnsemblBacteria" id="ABR78864">
    <property type="protein sequence ID" value="ABR78864"/>
    <property type="gene ID" value="KPN_03468"/>
</dbReference>
<dbReference type="GeneID" id="69753413"/>
<dbReference type="KEGG" id="kpn:KPN_03468"/>
<dbReference type="HOGENOM" id="CLU_093757_2_0_6"/>
<dbReference type="Proteomes" id="UP000000265">
    <property type="component" value="Chromosome"/>
</dbReference>
<dbReference type="GO" id="GO:0005737">
    <property type="term" value="C:cytoplasm"/>
    <property type="evidence" value="ECO:0007669"/>
    <property type="project" value="UniProtKB-SubCell"/>
</dbReference>
<dbReference type="GO" id="GO:0016151">
    <property type="term" value="F:nickel cation binding"/>
    <property type="evidence" value="ECO:0007669"/>
    <property type="project" value="UniProtKB-UniRule"/>
</dbReference>
<dbReference type="GO" id="GO:0051082">
    <property type="term" value="F:unfolded protein binding"/>
    <property type="evidence" value="ECO:0007669"/>
    <property type="project" value="UniProtKB-UniRule"/>
</dbReference>
<dbReference type="GO" id="GO:0006457">
    <property type="term" value="P:protein folding"/>
    <property type="evidence" value="ECO:0007669"/>
    <property type="project" value="InterPro"/>
</dbReference>
<dbReference type="GO" id="GO:0065003">
    <property type="term" value="P:protein-containing complex assembly"/>
    <property type="evidence" value="ECO:0007669"/>
    <property type="project" value="InterPro"/>
</dbReference>
<dbReference type="GO" id="GO:0019627">
    <property type="term" value="P:urea metabolic process"/>
    <property type="evidence" value="ECO:0007669"/>
    <property type="project" value="InterPro"/>
</dbReference>
<dbReference type="CDD" id="cd00571">
    <property type="entry name" value="UreE"/>
    <property type="match status" value="1"/>
</dbReference>
<dbReference type="Gene3D" id="2.60.260.20">
    <property type="entry name" value="Urease metallochaperone UreE, N-terminal domain"/>
    <property type="match status" value="1"/>
</dbReference>
<dbReference type="Gene3D" id="3.30.70.790">
    <property type="entry name" value="UreE, C-terminal domain"/>
    <property type="match status" value="1"/>
</dbReference>
<dbReference type="HAMAP" id="MF_00822">
    <property type="entry name" value="UreE"/>
    <property type="match status" value="1"/>
</dbReference>
<dbReference type="InterPro" id="IPR012406">
    <property type="entry name" value="UreE"/>
</dbReference>
<dbReference type="InterPro" id="IPR007864">
    <property type="entry name" value="UreE_C_dom"/>
</dbReference>
<dbReference type="InterPro" id="IPR004029">
    <property type="entry name" value="UreE_N"/>
</dbReference>
<dbReference type="InterPro" id="IPR036118">
    <property type="entry name" value="UreE_N_sf"/>
</dbReference>
<dbReference type="NCBIfam" id="NF009751">
    <property type="entry name" value="PRK13261.1-1"/>
    <property type="match status" value="1"/>
</dbReference>
<dbReference type="Pfam" id="PF05194">
    <property type="entry name" value="UreE_C"/>
    <property type="match status" value="1"/>
</dbReference>
<dbReference type="Pfam" id="PF02814">
    <property type="entry name" value="UreE_N"/>
    <property type="match status" value="1"/>
</dbReference>
<dbReference type="PIRSF" id="PIRSF036402">
    <property type="entry name" value="Ureas_acces_UreE"/>
    <property type="match status" value="1"/>
</dbReference>
<dbReference type="SMART" id="SM00988">
    <property type="entry name" value="UreE_N"/>
    <property type="match status" value="1"/>
</dbReference>
<dbReference type="SUPFAM" id="SSF69737">
    <property type="entry name" value="Urease metallochaperone UreE, C-terminal domain"/>
    <property type="match status" value="1"/>
</dbReference>
<dbReference type="SUPFAM" id="SSF69287">
    <property type="entry name" value="Urease metallochaperone UreE, N-terminal domain"/>
    <property type="match status" value="1"/>
</dbReference>
<name>UREE_KLEP7</name>